<reference key="1">
    <citation type="journal article" date="1998" name="NeuroReport">
        <title>Cloning of a novel murine isoform of the glial cell line-derived neurotrophic factor receptor.</title>
        <authorList>
            <person name="Dey B.K."/>
            <person name="Wong Y.W."/>
            <person name="Too H.P."/>
        </authorList>
    </citation>
    <scope>NUCLEOTIDE SEQUENCE [MRNA] (ISOFORMS 1 AND 2)</scope>
    <scope>TISSUE SPECIFICITY</scope>
    <source>
        <strain>C57BL/6J</strain>
        <tissue>Liver</tissue>
    </source>
</reference>
<reference key="2">
    <citation type="submission" date="1997-02" db="EMBL/GenBank/DDBJ databases">
        <authorList>
            <person name="Watabe K."/>
        </authorList>
    </citation>
    <scope>NUCLEOTIDE SEQUENCE [MRNA] (ISOFORM 1)</scope>
    <source>
        <tissue>Spinal ganglion</tissue>
    </source>
</reference>
<reference key="3">
    <citation type="submission" date="2005-07" db="EMBL/GenBank/DDBJ databases">
        <authorList>
            <person name="Mural R.J."/>
            <person name="Adams M.D."/>
            <person name="Myers E.W."/>
            <person name="Smith H.O."/>
            <person name="Venter J.C."/>
        </authorList>
    </citation>
    <scope>NUCLEOTIDE SEQUENCE [LARGE SCALE GENOMIC DNA]</scope>
</reference>
<reference key="4">
    <citation type="journal article" date="2004" name="Genome Res.">
        <title>The status, quality, and expansion of the NIH full-length cDNA project: the Mammalian Gene Collection (MGC).</title>
        <authorList>
            <consortium name="The MGC Project Team"/>
        </authorList>
    </citation>
    <scope>NUCLEOTIDE SEQUENCE [LARGE SCALE MRNA] (ISOFORM 1)</scope>
    <source>
        <tissue>Olfactory epithelium</tissue>
    </source>
</reference>
<reference key="5">
    <citation type="journal article" date="2013" name="Cell Rep.">
        <title>SorLA controls neurotrophic activity by sorting of GDNF and its receptors GFRalpha1 and RET.</title>
        <authorList>
            <person name="Glerup S."/>
            <person name="Lume M."/>
            <person name="Olsen D."/>
            <person name="Nyengaard J.R."/>
            <person name="Vaegter C.B."/>
            <person name="Gustafsen C."/>
            <person name="Christensen E.I."/>
            <person name="Kjolby M."/>
            <person name="Hay-Schmidt A."/>
            <person name="Bender D."/>
            <person name="Madsen P."/>
            <person name="Saarma M."/>
            <person name="Nykjaer A."/>
            <person name="Petersen C.M."/>
        </authorList>
    </citation>
    <scope>TISSUE SPECIFICITY</scope>
</reference>
<gene>
    <name type="primary">Gfra1</name>
    <name type="synonym">Gdnfra</name>
    <name type="synonym">Trnr1</name>
</gene>
<name>GFRA1_MOUSE</name>
<comment type="function">
    <text evidence="1">Coreceptor for GDNF, a neurotrophic factor that enhances survival and morphological differentiation of dopaminergic neurons and increases their high-affinity dopamine uptake. GDNF-binding leads to autophosphorylation and activation of the RET receptor.</text>
</comment>
<comment type="subunit">
    <text evidence="1">Interacts with GDNF ligand and RET: forms a 2:2:2 ternary complex composed of GDNF ligand, GFRA1 and RET receptor. Interacts with SORL1, either alone or in complex with GDNF. Interaction between SORL1 and GFRA1 leads to GFRA1 internalization, but not degradation.</text>
</comment>
<comment type="interaction">
    <interactant intactId="EBI-5549349">
        <id>P97785</id>
    </interactant>
    <interactant intactId="EBI-2480800">
        <id>P35546</id>
        <label>Ret</label>
    </interactant>
    <organismsDiffer>false</organismsDiffer>
    <experiments>2</experiments>
</comment>
<comment type="subcellular location">
    <subcellularLocation>
        <location evidence="2">Cell membrane</location>
        <topology evidence="2">Lipid-anchor</topology>
        <topology evidence="2">GPI-anchor</topology>
    </subcellularLocation>
    <subcellularLocation>
        <location evidence="2">Golgi apparatus</location>
        <location evidence="2">trans-Golgi network</location>
    </subcellularLocation>
    <subcellularLocation>
        <location evidence="2">Endosome</location>
    </subcellularLocation>
    <subcellularLocation>
        <location evidence="2">Endosome</location>
        <location evidence="2">Multivesicular body</location>
    </subcellularLocation>
    <text evidence="2">Localizes mainly to the plasma membrane. In the presence of SORL1, shifts to vesicular structures, including trans-Golgi network, endosomes and multivesicular bodies.</text>
</comment>
<comment type="alternative products">
    <event type="alternative splicing"/>
    <isoform>
        <id>P97785-1</id>
        <name>1</name>
        <name>GDNFR-alpha</name>
        <sequence type="displayed"/>
    </isoform>
    <isoform>
        <id>P97785-2</id>
        <name>2</name>
        <name>GDNFR-beta</name>
        <sequence type="described" ref="VSP_041630"/>
    </isoform>
</comment>
<comment type="tissue specificity">
    <text evidence="4 5">Expressed in the brain, in hippocampal neurons (at protein level) (PubMed:23333276). Isoform 1 and isoform 2 are expressed in heart, brain, lung, liver, kidney and testis.</text>
</comment>
<comment type="similarity">
    <text evidence="7">Belongs to the GDNFR family.</text>
</comment>
<dbReference type="EMBL" id="AF014117">
    <property type="protein sequence ID" value="AAB86599.1"/>
    <property type="molecule type" value="mRNA"/>
</dbReference>
<dbReference type="EMBL" id="AF015172">
    <property type="protein sequence ID" value="AAB86600.1"/>
    <property type="molecule type" value="mRNA"/>
</dbReference>
<dbReference type="EMBL" id="AB000800">
    <property type="protein sequence ID" value="BAA19185.1"/>
    <property type="molecule type" value="mRNA"/>
</dbReference>
<dbReference type="EMBL" id="CH466585">
    <property type="protein sequence ID" value="EDL01795.1"/>
    <property type="molecule type" value="Genomic_DNA"/>
</dbReference>
<dbReference type="EMBL" id="CH466585">
    <property type="protein sequence ID" value="EDL01796.1"/>
    <property type="molecule type" value="Genomic_DNA"/>
</dbReference>
<dbReference type="EMBL" id="BC054378">
    <property type="protein sequence ID" value="AAH54378.1"/>
    <property type="molecule type" value="mRNA"/>
</dbReference>
<dbReference type="CCDS" id="CCDS38028.1">
    <molecule id="P97785-1"/>
</dbReference>
<dbReference type="CCDS" id="CCDS70967.1">
    <molecule id="P97785-2"/>
</dbReference>
<dbReference type="RefSeq" id="NP_001272386.1">
    <molecule id="P97785-2"/>
    <property type="nucleotide sequence ID" value="NM_001285457.3"/>
</dbReference>
<dbReference type="RefSeq" id="NP_001397277.1">
    <molecule id="P97785-2"/>
    <property type="nucleotide sequence ID" value="NM_001410348.1"/>
</dbReference>
<dbReference type="RefSeq" id="NP_034409.1">
    <molecule id="P97785-1"/>
    <property type="nucleotide sequence ID" value="NM_010279.4"/>
</dbReference>
<dbReference type="RefSeq" id="XP_006526744.1">
    <molecule id="P97785-1"/>
    <property type="nucleotide sequence ID" value="XM_006526681.2"/>
</dbReference>
<dbReference type="RefSeq" id="XP_006526745.1">
    <molecule id="P97785-1"/>
    <property type="nucleotide sequence ID" value="XM_006526682.1"/>
</dbReference>
<dbReference type="RefSeq" id="XP_006526746.1">
    <molecule id="P97785-1"/>
    <property type="nucleotide sequence ID" value="XM_006526683.5"/>
</dbReference>
<dbReference type="RefSeq" id="XP_006526747.1">
    <molecule id="P97785-1"/>
    <property type="nucleotide sequence ID" value="XM_006526684.1"/>
</dbReference>
<dbReference type="SMR" id="P97785"/>
<dbReference type="BioGRID" id="199904">
    <property type="interactions" value="6"/>
</dbReference>
<dbReference type="CORUM" id="P97785"/>
<dbReference type="FunCoup" id="P97785">
    <property type="interactions" value="26"/>
</dbReference>
<dbReference type="IntAct" id="P97785">
    <property type="interactions" value="1"/>
</dbReference>
<dbReference type="MINT" id="P97785"/>
<dbReference type="STRING" id="10090.ENSMUSP00000026076"/>
<dbReference type="GlyCosmos" id="P97785">
    <property type="glycosylation" value="3 sites, No reported glycans"/>
</dbReference>
<dbReference type="GlyGen" id="P97785">
    <property type="glycosylation" value="3 sites, 1 N-linked glycan (2 sites)"/>
</dbReference>
<dbReference type="iPTMnet" id="P97785"/>
<dbReference type="PhosphoSitePlus" id="P97785"/>
<dbReference type="SwissPalm" id="P97785"/>
<dbReference type="PaxDb" id="10090-ENSMUSP00000026076"/>
<dbReference type="PeptideAtlas" id="P97785"/>
<dbReference type="ProteomicsDB" id="268866">
    <molecule id="P97785-1"/>
</dbReference>
<dbReference type="ProteomicsDB" id="268867">
    <molecule id="P97785-2"/>
</dbReference>
<dbReference type="Antibodypedia" id="18697">
    <property type="antibodies" value="457 antibodies from 39 providers"/>
</dbReference>
<dbReference type="DNASU" id="14585"/>
<dbReference type="Ensembl" id="ENSMUST00000026076.14">
    <molecule id="P97785-1"/>
    <property type="protein sequence ID" value="ENSMUSP00000026076.8"/>
    <property type="gene ID" value="ENSMUSG00000025089.16"/>
</dbReference>
<dbReference type="Ensembl" id="ENSMUST00000129100.8">
    <molecule id="P97785-2"/>
    <property type="protein sequence ID" value="ENSMUSP00000117196.2"/>
    <property type="gene ID" value="ENSMUSG00000025089.16"/>
</dbReference>
<dbReference type="Ensembl" id="ENSMUST00000152507.8">
    <molecule id="P97785-1"/>
    <property type="protein sequence ID" value="ENSMUSP00000120333.2"/>
    <property type="gene ID" value="ENSMUSG00000025089.16"/>
</dbReference>
<dbReference type="Ensembl" id="ENSMUST00000169850.8">
    <molecule id="P97785-1"/>
    <property type="protein sequence ID" value="ENSMUSP00000130128.2"/>
    <property type="gene ID" value="ENSMUSG00000025089.16"/>
</dbReference>
<dbReference type="GeneID" id="14585"/>
<dbReference type="KEGG" id="mmu:14585"/>
<dbReference type="UCSC" id="uc008ial.2">
    <molecule id="P97785-2"/>
    <property type="organism name" value="mouse"/>
</dbReference>
<dbReference type="UCSC" id="uc008ian.2">
    <molecule id="P97785-1"/>
    <property type="organism name" value="mouse"/>
</dbReference>
<dbReference type="AGR" id="MGI:1100842"/>
<dbReference type="CTD" id="2674"/>
<dbReference type="MGI" id="MGI:1100842">
    <property type="gene designation" value="Gfra1"/>
</dbReference>
<dbReference type="VEuPathDB" id="HostDB:ENSMUSG00000025089"/>
<dbReference type="eggNOG" id="ENOG502QQA2">
    <property type="taxonomic scope" value="Eukaryota"/>
</dbReference>
<dbReference type="GeneTree" id="ENSGT00940000155560"/>
<dbReference type="InParanoid" id="P97785"/>
<dbReference type="OMA" id="CKKFLNF"/>
<dbReference type="OrthoDB" id="9435188at2759"/>
<dbReference type="PhylomeDB" id="P97785"/>
<dbReference type="TreeFam" id="TF331647"/>
<dbReference type="Reactome" id="R-MMU-5673001">
    <property type="pathway name" value="RAF/MAP kinase cascade"/>
</dbReference>
<dbReference type="Reactome" id="R-MMU-8853659">
    <property type="pathway name" value="RET signaling"/>
</dbReference>
<dbReference type="BioGRID-ORCS" id="14585">
    <property type="hits" value="2 hits in 76 CRISPR screens"/>
</dbReference>
<dbReference type="ChiTaRS" id="Gfra1">
    <property type="organism name" value="mouse"/>
</dbReference>
<dbReference type="PRO" id="PR:P97785"/>
<dbReference type="Proteomes" id="UP000000589">
    <property type="component" value="Chromosome 19"/>
</dbReference>
<dbReference type="RNAct" id="P97785">
    <property type="molecule type" value="protein"/>
</dbReference>
<dbReference type="Bgee" id="ENSMUSG00000025089">
    <property type="expression patterns" value="Expressed in vestibular membrane of cochlear duct and 214 other cell types or tissues"/>
</dbReference>
<dbReference type="ExpressionAtlas" id="P97785">
    <property type="expression patterns" value="baseline and differential"/>
</dbReference>
<dbReference type="GO" id="GO:0030424">
    <property type="term" value="C:axon"/>
    <property type="evidence" value="ECO:0007669"/>
    <property type="project" value="Ensembl"/>
</dbReference>
<dbReference type="GO" id="GO:0009897">
    <property type="term" value="C:external side of plasma membrane"/>
    <property type="evidence" value="ECO:0007669"/>
    <property type="project" value="Ensembl"/>
</dbReference>
<dbReference type="GO" id="GO:0005615">
    <property type="term" value="C:extracellular space"/>
    <property type="evidence" value="ECO:0007669"/>
    <property type="project" value="Ensembl"/>
</dbReference>
<dbReference type="GO" id="GO:0019898">
    <property type="term" value="C:extrinsic component of membrane"/>
    <property type="evidence" value="ECO:0000304"/>
    <property type="project" value="MGI"/>
</dbReference>
<dbReference type="GO" id="GO:0005794">
    <property type="term" value="C:Golgi apparatus"/>
    <property type="evidence" value="ECO:0007669"/>
    <property type="project" value="UniProtKB-SubCell"/>
</dbReference>
<dbReference type="GO" id="GO:0005771">
    <property type="term" value="C:multivesicular body"/>
    <property type="evidence" value="ECO:0007669"/>
    <property type="project" value="UniProtKB-SubCell"/>
</dbReference>
<dbReference type="GO" id="GO:0043025">
    <property type="term" value="C:neuronal cell body"/>
    <property type="evidence" value="ECO:0007669"/>
    <property type="project" value="Ensembl"/>
</dbReference>
<dbReference type="GO" id="GO:0005886">
    <property type="term" value="C:plasma membrane"/>
    <property type="evidence" value="ECO:0000304"/>
    <property type="project" value="Reactome"/>
</dbReference>
<dbReference type="GO" id="GO:0098797">
    <property type="term" value="C:plasma membrane protein complex"/>
    <property type="evidence" value="ECO:0007669"/>
    <property type="project" value="Ensembl"/>
</dbReference>
<dbReference type="GO" id="GO:0043235">
    <property type="term" value="C:receptor complex"/>
    <property type="evidence" value="ECO:0007669"/>
    <property type="project" value="Ensembl"/>
</dbReference>
<dbReference type="GO" id="GO:0016167">
    <property type="term" value="F:glial cell-derived neurotrophic factor receptor activity"/>
    <property type="evidence" value="ECO:0000250"/>
    <property type="project" value="UniProtKB"/>
</dbReference>
<dbReference type="GO" id="GO:0005178">
    <property type="term" value="F:integrin binding"/>
    <property type="evidence" value="ECO:0007669"/>
    <property type="project" value="Ensembl"/>
</dbReference>
<dbReference type="GO" id="GO:0005030">
    <property type="term" value="F:neurotrophin receptor activity"/>
    <property type="evidence" value="ECO:0007669"/>
    <property type="project" value="Ensembl"/>
</dbReference>
<dbReference type="GO" id="GO:0038023">
    <property type="term" value="F:signaling receptor activity"/>
    <property type="evidence" value="ECO:0000304"/>
    <property type="project" value="MGI"/>
</dbReference>
<dbReference type="GO" id="GO:0009653">
    <property type="term" value="P:anatomical structure morphogenesis"/>
    <property type="evidence" value="ECO:0000304"/>
    <property type="project" value="MGI"/>
</dbReference>
<dbReference type="GO" id="GO:0016477">
    <property type="term" value="P:cell migration"/>
    <property type="evidence" value="ECO:0007669"/>
    <property type="project" value="Ensembl"/>
</dbReference>
<dbReference type="GO" id="GO:0007169">
    <property type="term" value="P:cell surface receptor protein tyrosine kinase signaling pathway"/>
    <property type="evidence" value="ECO:0000304"/>
    <property type="project" value="MGI"/>
</dbReference>
<dbReference type="GO" id="GO:0035860">
    <property type="term" value="P:glial cell-derived neurotrophic factor receptor signaling pathway"/>
    <property type="evidence" value="ECO:0000250"/>
    <property type="project" value="UniProtKB"/>
</dbReference>
<dbReference type="GO" id="GO:0001822">
    <property type="term" value="P:kidney development"/>
    <property type="evidence" value="ECO:0007669"/>
    <property type="project" value="Ensembl"/>
</dbReference>
<dbReference type="GO" id="GO:0008584">
    <property type="term" value="P:male gonad development"/>
    <property type="evidence" value="ECO:0007669"/>
    <property type="project" value="Ensembl"/>
</dbReference>
<dbReference type="GO" id="GO:0007399">
    <property type="term" value="P:nervous system development"/>
    <property type="evidence" value="ECO:0000315"/>
    <property type="project" value="MGI"/>
</dbReference>
<dbReference type="GO" id="GO:0031175">
    <property type="term" value="P:neuron projection development"/>
    <property type="evidence" value="ECO:0007669"/>
    <property type="project" value="Ensembl"/>
</dbReference>
<dbReference type="FunFam" id="1.10.220.110:FF:000001">
    <property type="entry name" value="GDNF family receptor alpha"/>
    <property type="match status" value="1"/>
</dbReference>
<dbReference type="Gene3D" id="1.10.220.110">
    <property type="entry name" value="GDNF binding domain"/>
    <property type="match status" value="1"/>
</dbReference>
<dbReference type="InterPro" id="IPR016017">
    <property type="entry name" value="GDNF/GAS1"/>
</dbReference>
<dbReference type="InterPro" id="IPR037193">
    <property type="entry name" value="GDNF_alpha"/>
</dbReference>
<dbReference type="InterPro" id="IPR003438">
    <property type="entry name" value="GDNF_rcpt"/>
</dbReference>
<dbReference type="InterPro" id="IPR003503">
    <property type="entry name" value="GDNF_rcpt_A1"/>
</dbReference>
<dbReference type="InterPro" id="IPR017372">
    <property type="entry name" value="Glial_neurotroph_fac_rcpt_a1/2"/>
</dbReference>
<dbReference type="PANTHER" id="PTHR10269:SF3">
    <property type="entry name" value="GDNF FAMILY RECEPTOR ALPHA-1"/>
    <property type="match status" value="1"/>
</dbReference>
<dbReference type="PANTHER" id="PTHR10269">
    <property type="entry name" value="GDNF RECEPTOR ALPHA"/>
    <property type="match status" value="1"/>
</dbReference>
<dbReference type="Pfam" id="PF02351">
    <property type="entry name" value="GDNF"/>
    <property type="match status" value="3"/>
</dbReference>
<dbReference type="PIRSF" id="PIRSF038071">
    <property type="entry name" value="GDNF_family_receptor_alpha"/>
    <property type="match status" value="1"/>
</dbReference>
<dbReference type="PRINTS" id="PR01317">
    <property type="entry name" value="GDNFRALPHA1"/>
</dbReference>
<dbReference type="PRINTS" id="PR01316">
    <property type="entry name" value="GDNFRECEPTOR"/>
</dbReference>
<dbReference type="SMART" id="SM00907">
    <property type="entry name" value="GDNF"/>
    <property type="match status" value="3"/>
</dbReference>
<dbReference type="SUPFAM" id="SSF110035">
    <property type="entry name" value="GDNF receptor-like"/>
    <property type="match status" value="1"/>
</dbReference>
<sequence length="468" mass="51752">MFLATLYFVLPLLDLLMSAEVSGGDRLDCVKASDQCLKEQSCSTKYRTLRQCVAGKETNFSLTSGLEAKDECRSAMEALKQKSLYNCRCKRGMKKEKNCLRIYWSMYQSLQGNDLLEDSPYEPVNSRLSDIFRAVPFISDVFQQVEHISKGNNCLDAAKACNLDDTCKKYRSAYITPCTTSMSNEVCNRRKCHKALRQFFDKVPAKHSYGMLFCSCRDVACTERRRQTIVPVCSYEERERPNCLNLQDSCKTNYICRSRLADFFTNCQPESRSVSNCLKENYADCLLAYSGLIGTVMTPNYIDSSSLSVAPWCDCSNSGNDLEDCLKFLNFFKDNTCLKNAIQAFGNGSDVTMWQPAPPVQTTTATTTTAFRIKNKPLGPAGSENEIPTHVLPPCANLQAQKLKSNVSGSTHLCLSDNDYGKDGLAGASSHITTKSMAAPPSCGLSSLPVMVFTALAALLSVSLAETS</sequence>
<feature type="signal peptide" evidence="3">
    <location>
        <begin position="1"/>
        <end position="24"/>
    </location>
</feature>
<feature type="chain" id="PRO_0000010779" description="GDNF family receptor alpha-1">
    <location>
        <begin position="25"/>
        <end position="430"/>
    </location>
</feature>
<feature type="propeptide" id="PRO_0000010780" description="Removed in mature form" evidence="3">
    <location>
        <begin position="431"/>
        <end position="468"/>
    </location>
</feature>
<feature type="repeat" description="1">
    <location>
        <begin position="25"/>
        <end position="113"/>
    </location>
</feature>
<feature type="repeat" description="2">
    <location>
        <begin position="150"/>
        <end position="238"/>
    </location>
</feature>
<feature type="repeat" description="3">
    <location>
        <begin position="239"/>
        <end position="342"/>
    </location>
</feature>
<feature type="lipid moiety-binding region" description="GPI-anchor amidated serine" evidence="3">
    <location>
        <position position="430"/>
    </location>
</feature>
<feature type="glycosylation site" description="N-linked (GlcNAc...) asparagine" evidence="3">
    <location>
        <position position="59"/>
    </location>
</feature>
<feature type="glycosylation site" description="N-linked (GlcNAc...) asparagine" evidence="3">
    <location>
        <position position="347"/>
    </location>
</feature>
<feature type="glycosylation site" description="N-linked (GlcNAc...) asparagine" evidence="3">
    <location>
        <position position="406"/>
    </location>
</feature>
<feature type="disulfide bond" evidence="2">
    <location>
        <begin position="36"/>
        <end position="42"/>
    </location>
</feature>
<feature type="disulfide bond" evidence="1">
    <location>
        <begin position="154"/>
        <end position="214"/>
    </location>
</feature>
<feature type="disulfide bond" evidence="1">
    <location>
        <begin position="161"/>
        <end position="167"/>
    </location>
</feature>
<feature type="disulfide bond" evidence="1">
    <location>
        <begin position="178"/>
        <end position="192"/>
    </location>
</feature>
<feature type="disulfide bond" evidence="1">
    <location>
        <begin position="187"/>
        <end position="233"/>
    </location>
</feature>
<feature type="disulfide bond" evidence="1">
    <location>
        <begin position="216"/>
        <end position="221"/>
    </location>
</feature>
<feature type="disulfide bond" evidence="1">
    <location>
        <begin position="243"/>
        <end position="313"/>
    </location>
</feature>
<feature type="disulfide bond" evidence="1">
    <location>
        <begin position="250"/>
        <end position="256"/>
    </location>
</feature>
<feature type="disulfide bond" evidence="1">
    <location>
        <begin position="267"/>
        <end position="285"/>
    </location>
</feature>
<feature type="disulfide bond" evidence="1">
    <location>
        <begin position="277"/>
        <end position="337"/>
    </location>
</feature>
<feature type="disulfide bond" evidence="1">
    <location>
        <begin position="315"/>
        <end position="325"/>
    </location>
</feature>
<feature type="splice variant" id="VSP_041630" description="In isoform 2." evidence="6">
    <location>
        <begin position="140"/>
        <end position="144"/>
    </location>
</feature>
<feature type="sequence conflict" description="In Ref. 2; BAA19185." evidence="7" ref="2">
    <original>T</original>
    <variation>M</variation>
    <location>
        <position position="366"/>
    </location>
</feature>
<keyword id="KW-0025">Alternative splicing</keyword>
<keyword id="KW-1003">Cell membrane</keyword>
<keyword id="KW-1015">Disulfide bond</keyword>
<keyword id="KW-0967">Endosome</keyword>
<keyword id="KW-0325">Glycoprotein</keyword>
<keyword id="KW-0333">Golgi apparatus</keyword>
<keyword id="KW-0336">GPI-anchor</keyword>
<keyword id="KW-0449">Lipoprotein</keyword>
<keyword id="KW-0472">Membrane</keyword>
<keyword id="KW-0675">Receptor</keyword>
<keyword id="KW-1185">Reference proteome</keyword>
<keyword id="KW-0677">Repeat</keyword>
<keyword id="KW-0732">Signal</keyword>
<proteinExistence type="evidence at protein level"/>
<accession>P97785</accession>
<accession>O35246</accession>
<accession>O35252</accession>
<organism>
    <name type="scientific">Mus musculus</name>
    <name type="common">Mouse</name>
    <dbReference type="NCBI Taxonomy" id="10090"/>
    <lineage>
        <taxon>Eukaryota</taxon>
        <taxon>Metazoa</taxon>
        <taxon>Chordata</taxon>
        <taxon>Craniata</taxon>
        <taxon>Vertebrata</taxon>
        <taxon>Euteleostomi</taxon>
        <taxon>Mammalia</taxon>
        <taxon>Eutheria</taxon>
        <taxon>Euarchontoglires</taxon>
        <taxon>Glires</taxon>
        <taxon>Rodentia</taxon>
        <taxon>Myomorpha</taxon>
        <taxon>Muroidea</taxon>
        <taxon>Muridae</taxon>
        <taxon>Murinae</taxon>
        <taxon>Mus</taxon>
        <taxon>Mus</taxon>
    </lineage>
</organism>
<evidence type="ECO:0000250" key="1">
    <source>
        <dbReference type="UniProtKB" id="P56159"/>
    </source>
</evidence>
<evidence type="ECO:0000250" key="2">
    <source>
        <dbReference type="UniProtKB" id="Q62997"/>
    </source>
</evidence>
<evidence type="ECO:0000255" key="3"/>
<evidence type="ECO:0000269" key="4">
    <source>
    </source>
</evidence>
<evidence type="ECO:0000269" key="5">
    <source>
    </source>
</evidence>
<evidence type="ECO:0000303" key="6">
    <source>
    </source>
</evidence>
<evidence type="ECO:0000305" key="7"/>
<protein>
    <recommendedName>
        <fullName>GDNF family receptor alpha-1</fullName>
        <shortName>GDNF receptor alpha-1</shortName>
        <shortName>GDNFR-alpha-1</shortName>
        <shortName>GFR-alpha-1</shortName>
    </recommendedName>
    <alternativeName>
        <fullName>TGF-beta-related neurotrophic factor receptor 1</fullName>
    </alternativeName>
</protein>